<gene>
    <name evidence="1" type="primary">pnp</name>
    <name type="ordered locus">Gbem_1308</name>
</gene>
<sequence length="696" mass="74701">MVHTVQAECCGKTITIETGKIAKQASGAVMIKSGDTMVLVTAVAMKSAKEGQGFFPLTVNYQEKAYAGGRIPGSFFKREGRPSDNETLTCRLIDRPIRPLFPENFLNDTQIMATVVSADKDNDPGILSMIGASAALMVSDVPFAGPIAGVKVGRVDGQFIANPTAEQEEKSDLEIVIAASQDAILMVEGSACEVSEDDLLEAIFFGHKAVQPVLAAQLELAKKVGTSKREIPAPVVNEALKARVSALAKEGMKQAVRIKTKVERHLAIDAIADETVAALSAEFEGSEKEIKGFIEDLEYDLVREHIIKDGQRIDGRDTKTIRAISTEVSLLPRAHGSALFTRGETQSIVAATLGTSVDEQRIDSLYGDSRKKFMLHYNFPPYSVGETSFRLAPGRREIGHGMLAERALQQVLPKHDDFPYTIRIVSDITESNGSSSMATVCGGSLSMMDAGIPIKAPVAGIAMGLIKEGDDFAILSDILGDEDHLGDMDFKVAGTAEGVTALQMDIKIGGVTREIMSAALAQAKAGRIHILGEMAKTIGASRGDLSAFAPRITTIWVKVDKIRDVIGSGGKNIRSVTEATGVSIDIDDTGKINIASTNKEACDLAIKMIRNLTAEAEEGKLYMGTVKKIMEFGAFVEIFPGTDGLVHVSELDTERVKNVSDILKEGDKVLVKCIGIDKQGKIKLSRKEALGLTFTE</sequence>
<protein>
    <recommendedName>
        <fullName evidence="1">Polyribonucleotide nucleotidyltransferase</fullName>
        <ecNumber evidence="1">2.7.7.8</ecNumber>
    </recommendedName>
    <alternativeName>
        <fullName evidence="1">Polynucleotide phosphorylase</fullName>
        <shortName evidence="1">PNPase</shortName>
    </alternativeName>
</protein>
<dbReference type="EC" id="2.7.7.8" evidence="1"/>
<dbReference type="EMBL" id="CP001124">
    <property type="protein sequence ID" value="ACH38327.1"/>
    <property type="molecule type" value="Genomic_DNA"/>
</dbReference>
<dbReference type="RefSeq" id="WP_012529738.1">
    <property type="nucleotide sequence ID" value="NC_011146.1"/>
</dbReference>
<dbReference type="SMR" id="B5EI63"/>
<dbReference type="STRING" id="404380.Gbem_1308"/>
<dbReference type="KEGG" id="gbm:Gbem_1308"/>
<dbReference type="eggNOG" id="COG1185">
    <property type="taxonomic scope" value="Bacteria"/>
</dbReference>
<dbReference type="HOGENOM" id="CLU_004217_2_2_7"/>
<dbReference type="OrthoDB" id="9804305at2"/>
<dbReference type="Proteomes" id="UP000008825">
    <property type="component" value="Chromosome"/>
</dbReference>
<dbReference type="GO" id="GO:0005829">
    <property type="term" value="C:cytosol"/>
    <property type="evidence" value="ECO:0007669"/>
    <property type="project" value="TreeGrafter"/>
</dbReference>
<dbReference type="GO" id="GO:0000175">
    <property type="term" value="F:3'-5'-RNA exonuclease activity"/>
    <property type="evidence" value="ECO:0007669"/>
    <property type="project" value="TreeGrafter"/>
</dbReference>
<dbReference type="GO" id="GO:0000287">
    <property type="term" value="F:magnesium ion binding"/>
    <property type="evidence" value="ECO:0007669"/>
    <property type="project" value="UniProtKB-UniRule"/>
</dbReference>
<dbReference type="GO" id="GO:0004654">
    <property type="term" value="F:polyribonucleotide nucleotidyltransferase activity"/>
    <property type="evidence" value="ECO:0007669"/>
    <property type="project" value="UniProtKB-UniRule"/>
</dbReference>
<dbReference type="GO" id="GO:0003723">
    <property type="term" value="F:RNA binding"/>
    <property type="evidence" value="ECO:0007669"/>
    <property type="project" value="UniProtKB-UniRule"/>
</dbReference>
<dbReference type="GO" id="GO:0006402">
    <property type="term" value="P:mRNA catabolic process"/>
    <property type="evidence" value="ECO:0007669"/>
    <property type="project" value="UniProtKB-UniRule"/>
</dbReference>
<dbReference type="GO" id="GO:0006396">
    <property type="term" value="P:RNA processing"/>
    <property type="evidence" value="ECO:0007669"/>
    <property type="project" value="InterPro"/>
</dbReference>
<dbReference type="CDD" id="cd02393">
    <property type="entry name" value="KH-I_PNPase"/>
    <property type="match status" value="1"/>
</dbReference>
<dbReference type="CDD" id="cd11363">
    <property type="entry name" value="RNase_PH_PNPase_1"/>
    <property type="match status" value="1"/>
</dbReference>
<dbReference type="CDD" id="cd11364">
    <property type="entry name" value="RNase_PH_PNPase_2"/>
    <property type="match status" value="1"/>
</dbReference>
<dbReference type="CDD" id="cd04472">
    <property type="entry name" value="S1_PNPase"/>
    <property type="match status" value="1"/>
</dbReference>
<dbReference type="FunFam" id="2.40.50.140:FF:000023">
    <property type="entry name" value="Polyribonucleotide nucleotidyltransferase"/>
    <property type="match status" value="1"/>
</dbReference>
<dbReference type="FunFam" id="3.30.1370.10:FF:000001">
    <property type="entry name" value="Polyribonucleotide nucleotidyltransferase"/>
    <property type="match status" value="1"/>
</dbReference>
<dbReference type="FunFam" id="3.30.230.70:FF:000001">
    <property type="entry name" value="Polyribonucleotide nucleotidyltransferase"/>
    <property type="match status" value="1"/>
</dbReference>
<dbReference type="FunFam" id="3.30.230.70:FF:000002">
    <property type="entry name" value="Polyribonucleotide nucleotidyltransferase"/>
    <property type="match status" value="1"/>
</dbReference>
<dbReference type="Gene3D" id="3.30.230.70">
    <property type="entry name" value="GHMP Kinase, N-terminal domain"/>
    <property type="match status" value="2"/>
</dbReference>
<dbReference type="Gene3D" id="3.30.1370.10">
    <property type="entry name" value="K Homology domain, type 1"/>
    <property type="match status" value="1"/>
</dbReference>
<dbReference type="Gene3D" id="2.40.50.140">
    <property type="entry name" value="Nucleic acid-binding proteins"/>
    <property type="match status" value="1"/>
</dbReference>
<dbReference type="HAMAP" id="MF_01595">
    <property type="entry name" value="PNPase"/>
    <property type="match status" value="1"/>
</dbReference>
<dbReference type="InterPro" id="IPR001247">
    <property type="entry name" value="ExoRNase_PH_dom1"/>
</dbReference>
<dbReference type="InterPro" id="IPR015847">
    <property type="entry name" value="ExoRNase_PH_dom2"/>
</dbReference>
<dbReference type="InterPro" id="IPR036345">
    <property type="entry name" value="ExoRNase_PH_dom2_sf"/>
</dbReference>
<dbReference type="InterPro" id="IPR004087">
    <property type="entry name" value="KH_dom"/>
</dbReference>
<dbReference type="InterPro" id="IPR004088">
    <property type="entry name" value="KH_dom_type_1"/>
</dbReference>
<dbReference type="InterPro" id="IPR036612">
    <property type="entry name" value="KH_dom_type_1_sf"/>
</dbReference>
<dbReference type="InterPro" id="IPR012340">
    <property type="entry name" value="NA-bd_OB-fold"/>
</dbReference>
<dbReference type="InterPro" id="IPR012162">
    <property type="entry name" value="PNPase"/>
</dbReference>
<dbReference type="InterPro" id="IPR027408">
    <property type="entry name" value="PNPase/RNase_PH_dom_sf"/>
</dbReference>
<dbReference type="InterPro" id="IPR015848">
    <property type="entry name" value="PNPase_PH_RNA-bd_bac/org-type"/>
</dbReference>
<dbReference type="InterPro" id="IPR036456">
    <property type="entry name" value="PNPase_PH_RNA-bd_sf"/>
</dbReference>
<dbReference type="InterPro" id="IPR020568">
    <property type="entry name" value="Ribosomal_Su5_D2-typ_SF"/>
</dbReference>
<dbReference type="InterPro" id="IPR003029">
    <property type="entry name" value="S1_domain"/>
</dbReference>
<dbReference type="NCBIfam" id="TIGR03591">
    <property type="entry name" value="polynuc_phos"/>
    <property type="match status" value="1"/>
</dbReference>
<dbReference type="NCBIfam" id="NF008805">
    <property type="entry name" value="PRK11824.1"/>
    <property type="match status" value="1"/>
</dbReference>
<dbReference type="PANTHER" id="PTHR11252">
    <property type="entry name" value="POLYRIBONUCLEOTIDE NUCLEOTIDYLTRANSFERASE"/>
    <property type="match status" value="1"/>
</dbReference>
<dbReference type="PANTHER" id="PTHR11252:SF0">
    <property type="entry name" value="POLYRIBONUCLEOTIDE NUCLEOTIDYLTRANSFERASE 1, MITOCHONDRIAL"/>
    <property type="match status" value="1"/>
</dbReference>
<dbReference type="Pfam" id="PF00013">
    <property type="entry name" value="KH_1"/>
    <property type="match status" value="1"/>
</dbReference>
<dbReference type="Pfam" id="PF03726">
    <property type="entry name" value="PNPase"/>
    <property type="match status" value="1"/>
</dbReference>
<dbReference type="Pfam" id="PF01138">
    <property type="entry name" value="RNase_PH"/>
    <property type="match status" value="2"/>
</dbReference>
<dbReference type="Pfam" id="PF03725">
    <property type="entry name" value="RNase_PH_C"/>
    <property type="match status" value="2"/>
</dbReference>
<dbReference type="Pfam" id="PF00575">
    <property type="entry name" value="S1"/>
    <property type="match status" value="1"/>
</dbReference>
<dbReference type="PIRSF" id="PIRSF005499">
    <property type="entry name" value="PNPase"/>
    <property type="match status" value="1"/>
</dbReference>
<dbReference type="SMART" id="SM00322">
    <property type="entry name" value="KH"/>
    <property type="match status" value="1"/>
</dbReference>
<dbReference type="SMART" id="SM00316">
    <property type="entry name" value="S1"/>
    <property type="match status" value="1"/>
</dbReference>
<dbReference type="SUPFAM" id="SSF54791">
    <property type="entry name" value="Eukaryotic type KH-domain (KH-domain type I)"/>
    <property type="match status" value="1"/>
</dbReference>
<dbReference type="SUPFAM" id="SSF50249">
    <property type="entry name" value="Nucleic acid-binding proteins"/>
    <property type="match status" value="1"/>
</dbReference>
<dbReference type="SUPFAM" id="SSF46915">
    <property type="entry name" value="Polynucleotide phosphorylase/guanosine pentaphosphate synthase (PNPase/GPSI), domain 3"/>
    <property type="match status" value="1"/>
</dbReference>
<dbReference type="SUPFAM" id="SSF55666">
    <property type="entry name" value="Ribonuclease PH domain 2-like"/>
    <property type="match status" value="2"/>
</dbReference>
<dbReference type="SUPFAM" id="SSF54211">
    <property type="entry name" value="Ribosomal protein S5 domain 2-like"/>
    <property type="match status" value="2"/>
</dbReference>
<dbReference type="PROSITE" id="PS50084">
    <property type="entry name" value="KH_TYPE_1"/>
    <property type="match status" value="1"/>
</dbReference>
<dbReference type="PROSITE" id="PS50126">
    <property type="entry name" value="S1"/>
    <property type="match status" value="1"/>
</dbReference>
<evidence type="ECO:0000255" key="1">
    <source>
        <dbReference type="HAMAP-Rule" id="MF_01595"/>
    </source>
</evidence>
<keyword id="KW-0963">Cytoplasm</keyword>
<keyword id="KW-0460">Magnesium</keyword>
<keyword id="KW-0479">Metal-binding</keyword>
<keyword id="KW-0548">Nucleotidyltransferase</keyword>
<keyword id="KW-1185">Reference proteome</keyword>
<keyword id="KW-0694">RNA-binding</keyword>
<keyword id="KW-0808">Transferase</keyword>
<proteinExistence type="inferred from homology"/>
<comment type="function">
    <text evidence="1">Involved in mRNA degradation. Catalyzes the phosphorolysis of single-stranded polyribonucleotides processively in the 3'- to 5'-direction.</text>
</comment>
<comment type="catalytic activity">
    <reaction evidence="1">
        <text>RNA(n+1) + phosphate = RNA(n) + a ribonucleoside 5'-diphosphate</text>
        <dbReference type="Rhea" id="RHEA:22096"/>
        <dbReference type="Rhea" id="RHEA-COMP:14527"/>
        <dbReference type="Rhea" id="RHEA-COMP:17342"/>
        <dbReference type="ChEBI" id="CHEBI:43474"/>
        <dbReference type="ChEBI" id="CHEBI:57930"/>
        <dbReference type="ChEBI" id="CHEBI:140395"/>
        <dbReference type="EC" id="2.7.7.8"/>
    </reaction>
</comment>
<comment type="cofactor">
    <cofactor evidence="1">
        <name>Mg(2+)</name>
        <dbReference type="ChEBI" id="CHEBI:18420"/>
    </cofactor>
</comment>
<comment type="subcellular location">
    <subcellularLocation>
        <location evidence="1">Cytoplasm</location>
    </subcellularLocation>
</comment>
<comment type="similarity">
    <text evidence="1">Belongs to the polyribonucleotide nucleotidyltransferase family.</text>
</comment>
<organism>
    <name type="scientific">Citrifermentans bemidjiense (strain ATCC BAA-1014 / DSM 16622 / JCM 12645 / Bem)</name>
    <name type="common">Geobacter bemidjiensis</name>
    <dbReference type="NCBI Taxonomy" id="404380"/>
    <lineage>
        <taxon>Bacteria</taxon>
        <taxon>Pseudomonadati</taxon>
        <taxon>Thermodesulfobacteriota</taxon>
        <taxon>Desulfuromonadia</taxon>
        <taxon>Geobacterales</taxon>
        <taxon>Geobacteraceae</taxon>
        <taxon>Citrifermentans</taxon>
    </lineage>
</organism>
<name>PNP_CITBB</name>
<accession>B5EI63</accession>
<reference key="1">
    <citation type="submission" date="2008-07" db="EMBL/GenBank/DDBJ databases">
        <title>Complete sequence of Geobacter bemidjiensis BEM.</title>
        <authorList>
            <consortium name="US DOE Joint Genome Institute"/>
            <person name="Lucas S."/>
            <person name="Copeland A."/>
            <person name="Lapidus A."/>
            <person name="Glavina del Rio T."/>
            <person name="Dalin E."/>
            <person name="Tice H."/>
            <person name="Bruce D."/>
            <person name="Goodwin L."/>
            <person name="Pitluck S."/>
            <person name="Kiss H."/>
            <person name="Brettin T."/>
            <person name="Detter J.C."/>
            <person name="Han C."/>
            <person name="Kuske C.R."/>
            <person name="Schmutz J."/>
            <person name="Larimer F."/>
            <person name="Land M."/>
            <person name="Hauser L."/>
            <person name="Kyrpides N."/>
            <person name="Lykidis A."/>
            <person name="Lovley D."/>
            <person name="Richardson P."/>
        </authorList>
    </citation>
    <scope>NUCLEOTIDE SEQUENCE [LARGE SCALE GENOMIC DNA]</scope>
    <source>
        <strain>ATCC BAA-1014 / DSM 16622 / JCM 12645 / Bem</strain>
    </source>
</reference>
<feature type="chain" id="PRO_0000381898" description="Polyribonucleotide nucleotidyltransferase">
    <location>
        <begin position="1"/>
        <end position="696"/>
    </location>
</feature>
<feature type="domain" description="KH" evidence="1">
    <location>
        <begin position="550"/>
        <end position="609"/>
    </location>
</feature>
<feature type="domain" description="S1 motif" evidence="1">
    <location>
        <begin position="619"/>
        <end position="687"/>
    </location>
</feature>
<feature type="binding site" evidence="1">
    <location>
        <position position="483"/>
    </location>
    <ligand>
        <name>Mg(2+)</name>
        <dbReference type="ChEBI" id="CHEBI:18420"/>
    </ligand>
</feature>
<feature type="binding site" evidence="1">
    <location>
        <position position="489"/>
    </location>
    <ligand>
        <name>Mg(2+)</name>
        <dbReference type="ChEBI" id="CHEBI:18420"/>
    </ligand>
</feature>